<dbReference type="EC" id="5.3.1.28" evidence="1"/>
<dbReference type="EMBL" id="CU928162">
    <property type="protein sequence ID" value="CAR06471.1"/>
    <property type="molecule type" value="Genomic_DNA"/>
</dbReference>
<dbReference type="SMR" id="B7MQ59"/>
<dbReference type="KEGG" id="ecq:ECED1_0256"/>
<dbReference type="HOGENOM" id="CLU_080999_4_0_6"/>
<dbReference type="UniPathway" id="UPA00041">
    <property type="reaction ID" value="UER00436"/>
</dbReference>
<dbReference type="Proteomes" id="UP000000748">
    <property type="component" value="Chromosome"/>
</dbReference>
<dbReference type="GO" id="GO:0005737">
    <property type="term" value="C:cytoplasm"/>
    <property type="evidence" value="ECO:0007669"/>
    <property type="project" value="UniProtKB-SubCell"/>
</dbReference>
<dbReference type="GO" id="GO:0097367">
    <property type="term" value="F:carbohydrate derivative binding"/>
    <property type="evidence" value="ECO:0007669"/>
    <property type="project" value="InterPro"/>
</dbReference>
<dbReference type="GO" id="GO:0008968">
    <property type="term" value="F:D-sedoheptulose 7-phosphate isomerase activity"/>
    <property type="evidence" value="ECO:0007669"/>
    <property type="project" value="UniProtKB-UniRule"/>
</dbReference>
<dbReference type="GO" id="GO:0008270">
    <property type="term" value="F:zinc ion binding"/>
    <property type="evidence" value="ECO:0007669"/>
    <property type="project" value="UniProtKB-UniRule"/>
</dbReference>
<dbReference type="GO" id="GO:0005975">
    <property type="term" value="P:carbohydrate metabolic process"/>
    <property type="evidence" value="ECO:0007669"/>
    <property type="project" value="UniProtKB-UniRule"/>
</dbReference>
<dbReference type="GO" id="GO:2001061">
    <property type="term" value="P:D-glycero-D-manno-heptose 7-phosphate biosynthetic process"/>
    <property type="evidence" value="ECO:0007669"/>
    <property type="project" value="UniProtKB-UniPathway"/>
</dbReference>
<dbReference type="CDD" id="cd05006">
    <property type="entry name" value="SIS_GmhA"/>
    <property type="match status" value="1"/>
</dbReference>
<dbReference type="FunFam" id="3.40.50.10490:FF:000013">
    <property type="entry name" value="Phosphoheptose isomerase"/>
    <property type="match status" value="1"/>
</dbReference>
<dbReference type="Gene3D" id="3.40.50.10490">
    <property type="entry name" value="Glucose-6-phosphate isomerase like protein, domain 1"/>
    <property type="match status" value="1"/>
</dbReference>
<dbReference type="HAMAP" id="MF_00067">
    <property type="entry name" value="GmhA"/>
    <property type="match status" value="1"/>
</dbReference>
<dbReference type="InterPro" id="IPR035461">
    <property type="entry name" value="GmhA/DiaA"/>
</dbReference>
<dbReference type="InterPro" id="IPR004515">
    <property type="entry name" value="Phosphoheptose_Isoase"/>
</dbReference>
<dbReference type="InterPro" id="IPR001347">
    <property type="entry name" value="SIS_dom"/>
</dbReference>
<dbReference type="InterPro" id="IPR046348">
    <property type="entry name" value="SIS_dom_sf"/>
</dbReference>
<dbReference type="InterPro" id="IPR050099">
    <property type="entry name" value="SIS_GmhA/DiaA_subfam"/>
</dbReference>
<dbReference type="NCBIfam" id="TIGR00441">
    <property type="entry name" value="gmhA"/>
    <property type="match status" value="1"/>
</dbReference>
<dbReference type="NCBIfam" id="NF001628">
    <property type="entry name" value="PRK00414.1"/>
    <property type="match status" value="1"/>
</dbReference>
<dbReference type="PANTHER" id="PTHR30390:SF7">
    <property type="entry name" value="PHOSPHOHEPTOSE ISOMERASE"/>
    <property type="match status" value="1"/>
</dbReference>
<dbReference type="PANTHER" id="PTHR30390">
    <property type="entry name" value="SEDOHEPTULOSE 7-PHOSPHATE ISOMERASE / DNAA INITIATOR-ASSOCIATING FACTOR FOR REPLICATION INITIATION"/>
    <property type="match status" value="1"/>
</dbReference>
<dbReference type="Pfam" id="PF13580">
    <property type="entry name" value="SIS_2"/>
    <property type="match status" value="1"/>
</dbReference>
<dbReference type="SUPFAM" id="SSF53697">
    <property type="entry name" value="SIS domain"/>
    <property type="match status" value="1"/>
</dbReference>
<dbReference type="PROSITE" id="PS51464">
    <property type="entry name" value="SIS"/>
    <property type="match status" value="1"/>
</dbReference>
<reference key="1">
    <citation type="journal article" date="2009" name="PLoS Genet.">
        <title>Organised genome dynamics in the Escherichia coli species results in highly diverse adaptive paths.</title>
        <authorList>
            <person name="Touchon M."/>
            <person name="Hoede C."/>
            <person name="Tenaillon O."/>
            <person name="Barbe V."/>
            <person name="Baeriswyl S."/>
            <person name="Bidet P."/>
            <person name="Bingen E."/>
            <person name="Bonacorsi S."/>
            <person name="Bouchier C."/>
            <person name="Bouvet O."/>
            <person name="Calteau A."/>
            <person name="Chiapello H."/>
            <person name="Clermont O."/>
            <person name="Cruveiller S."/>
            <person name="Danchin A."/>
            <person name="Diard M."/>
            <person name="Dossat C."/>
            <person name="Karoui M.E."/>
            <person name="Frapy E."/>
            <person name="Garry L."/>
            <person name="Ghigo J.M."/>
            <person name="Gilles A.M."/>
            <person name="Johnson J."/>
            <person name="Le Bouguenec C."/>
            <person name="Lescat M."/>
            <person name="Mangenot S."/>
            <person name="Martinez-Jehanne V."/>
            <person name="Matic I."/>
            <person name="Nassif X."/>
            <person name="Oztas S."/>
            <person name="Petit M.A."/>
            <person name="Pichon C."/>
            <person name="Rouy Z."/>
            <person name="Ruf C.S."/>
            <person name="Schneider D."/>
            <person name="Tourret J."/>
            <person name="Vacherie B."/>
            <person name="Vallenet D."/>
            <person name="Medigue C."/>
            <person name="Rocha E.P.C."/>
            <person name="Denamur E."/>
        </authorList>
    </citation>
    <scope>NUCLEOTIDE SEQUENCE [LARGE SCALE GENOMIC DNA]</scope>
    <source>
        <strain>ED1a</strain>
    </source>
</reference>
<comment type="function">
    <text evidence="1">Catalyzes the isomerization of sedoheptulose 7-phosphate in D-glycero-D-manno-heptose 7-phosphate.</text>
</comment>
<comment type="catalytic activity">
    <reaction evidence="1">
        <text>2 D-sedoheptulose 7-phosphate = D-glycero-alpha-D-manno-heptose 7-phosphate + D-glycero-beta-D-manno-heptose 7-phosphate</text>
        <dbReference type="Rhea" id="RHEA:27489"/>
        <dbReference type="ChEBI" id="CHEBI:57483"/>
        <dbReference type="ChEBI" id="CHEBI:60203"/>
        <dbReference type="ChEBI" id="CHEBI:60204"/>
        <dbReference type="EC" id="5.3.1.28"/>
    </reaction>
</comment>
<comment type="cofactor">
    <cofactor evidence="1">
        <name>Zn(2+)</name>
        <dbReference type="ChEBI" id="CHEBI:29105"/>
    </cofactor>
    <text evidence="1">Binds 1 zinc ion per subunit.</text>
</comment>
<comment type="pathway">
    <text evidence="1">Carbohydrate biosynthesis; D-glycero-D-manno-heptose 7-phosphate biosynthesis; D-glycero-alpha-D-manno-heptose 7-phosphate and D-glycero-beta-D-manno-heptose 7-phosphate from sedoheptulose 7-phosphate: step 1/1.</text>
</comment>
<comment type="subunit">
    <text evidence="1">Homotetramer.</text>
</comment>
<comment type="subcellular location">
    <subcellularLocation>
        <location evidence="1">Cytoplasm</location>
    </subcellularLocation>
</comment>
<comment type="miscellaneous">
    <text evidence="1">The reaction produces a racemic mixture of D-glycero-alpha-D-manno-heptose 7-phosphate and D-glycero-beta-D-manno-heptose 7-phosphate.</text>
</comment>
<comment type="similarity">
    <text evidence="1">Belongs to the SIS family. GmhA subfamily.</text>
</comment>
<organism>
    <name type="scientific">Escherichia coli O81 (strain ED1a)</name>
    <dbReference type="NCBI Taxonomy" id="585397"/>
    <lineage>
        <taxon>Bacteria</taxon>
        <taxon>Pseudomonadati</taxon>
        <taxon>Pseudomonadota</taxon>
        <taxon>Gammaproteobacteria</taxon>
        <taxon>Enterobacterales</taxon>
        <taxon>Enterobacteriaceae</taxon>
        <taxon>Escherichia</taxon>
    </lineage>
</organism>
<feature type="chain" id="PRO_1000197004" description="Phosphoheptose isomerase">
    <location>
        <begin position="1"/>
        <end position="192"/>
    </location>
</feature>
<feature type="domain" description="SIS" evidence="1">
    <location>
        <begin position="37"/>
        <end position="192"/>
    </location>
</feature>
<feature type="binding site" evidence="1">
    <location>
        <begin position="52"/>
        <end position="54"/>
    </location>
    <ligand>
        <name>substrate</name>
    </ligand>
</feature>
<feature type="binding site" evidence="1">
    <location>
        <position position="61"/>
    </location>
    <ligand>
        <name>Zn(2+)</name>
        <dbReference type="ChEBI" id="CHEBI:29105"/>
    </ligand>
</feature>
<feature type="binding site" evidence="1">
    <location>
        <position position="65"/>
    </location>
    <ligand>
        <name>substrate</name>
    </ligand>
</feature>
<feature type="binding site" evidence="1">
    <location>
        <position position="65"/>
    </location>
    <ligand>
        <name>Zn(2+)</name>
        <dbReference type="ChEBI" id="CHEBI:29105"/>
    </ligand>
</feature>
<feature type="binding site" evidence="1">
    <location>
        <begin position="93"/>
        <end position="94"/>
    </location>
    <ligand>
        <name>substrate</name>
    </ligand>
</feature>
<feature type="binding site" evidence="1">
    <location>
        <begin position="119"/>
        <end position="121"/>
    </location>
    <ligand>
        <name>substrate</name>
    </ligand>
</feature>
<feature type="binding site" evidence="1">
    <location>
        <position position="124"/>
    </location>
    <ligand>
        <name>substrate</name>
    </ligand>
</feature>
<feature type="binding site" evidence="1">
    <location>
        <position position="172"/>
    </location>
    <ligand>
        <name>substrate</name>
    </ligand>
</feature>
<feature type="binding site" evidence="1">
    <location>
        <position position="172"/>
    </location>
    <ligand>
        <name>Zn(2+)</name>
        <dbReference type="ChEBI" id="CHEBI:29105"/>
    </ligand>
</feature>
<feature type="binding site" evidence="1">
    <location>
        <position position="180"/>
    </location>
    <ligand>
        <name>Zn(2+)</name>
        <dbReference type="ChEBI" id="CHEBI:29105"/>
    </ligand>
</feature>
<name>GMHA_ECO81</name>
<proteinExistence type="inferred from homology"/>
<keyword id="KW-0119">Carbohydrate metabolism</keyword>
<keyword id="KW-0963">Cytoplasm</keyword>
<keyword id="KW-0413">Isomerase</keyword>
<keyword id="KW-0479">Metal-binding</keyword>
<keyword id="KW-0862">Zinc</keyword>
<evidence type="ECO:0000255" key="1">
    <source>
        <dbReference type="HAMAP-Rule" id="MF_00067"/>
    </source>
</evidence>
<gene>
    <name evidence="1" type="primary">gmhA</name>
    <name type="ordered locus">ECED1_0256</name>
</gene>
<protein>
    <recommendedName>
        <fullName evidence="1">Phosphoheptose isomerase</fullName>
        <ecNumber evidence="1">5.3.1.28</ecNumber>
    </recommendedName>
    <alternativeName>
        <fullName evidence="1">Sedoheptulose 7-phosphate isomerase</fullName>
    </alternativeName>
</protein>
<sequence length="192" mass="20815">MYQDLIRNELNEAAETLANFLKDDANIHAIQRAAVLLADSFKAGGKVLSCGNGGSHCDAMHFAEELTGRYRENRPGYPAIAISDVSHISCVGNDFGFNDIFSRYVEAVGREGDVLLGISTSGNSANVIKAIAAAREKGMKVITLTGKDGGKMAGTADIEIRVPHFGYADRIQEIHIKVIHILIQLIEKEMVK</sequence>
<accession>B7MQ59</accession>